<dbReference type="EMBL" id="CP000903">
    <property type="protein sequence ID" value="ABY46096.1"/>
    <property type="molecule type" value="Genomic_DNA"/>
</dbReference>
<dbReference type="SMR" id="A9VQ69"/>
<dbReference type="KEGG" id="bwe:BcerKBAB4_4948"/>
<dbReference type="eggNOG" id="COG1660">
    <property type="taxonomic scope" value="Bacteria"/>
</dbReference>
<dbReference type="HOGENOM" id="CLU_059558_0_0_9"/>
<dbReference type="Proteomes" id="UP000002154">
    <property type="component" value="Chromosome"/>
</dbReference>
<dbReference type="GO" id="GO:0005524">
    <property type="term" value="F:ATP binding"/>
    <property type="evidence" value="ECO:0007669"/>
    <property type="project" value="UniProtKB-UniRule"/>
</dbReference>
<dbReference type="GO" id="GO:0005525">
    <property type="term" value="F:GTP binding"/>
    <property type="evidence" value="ECO:0007669"/>
    <property type="project" value="UniProtKB-UniRule"/>
</dbReference>
<dbReference type="Gene3D" id="3.40.50.300">
    <property type="entry name" value="P-loop containing nucleotide triphosphate hydrolases"/>
    <property type="match status" value="1"/>
</dbReference>
<dbReference type="HAMAP" id="MF_00636">
    <property type="entry name" value="RapZ_like"/>
    <property type="match status" value="1"/>
</dbReference>
<dbReference type="InterPro" id="IPR027417">
    <property type="entry name" value="P-loop_NTPase"/>
</dbReference>
<dbReference type="InterPro" id="IPR005337">
    <property type="entry name" value="RapZ-like"/>
</dbReference>
<dbReference type="InterPro" id="IPR053930">
    <property type="entry name" value="RapZ-like_N"/>
</dbReference>
<dbReference type="InterPro" id="IPR053931">
    <property type="entry name" value="RapZ_C"/>
</dbReference>
<dbReference type="NCBIfam" id="NF003828">
    <property type="entry name" value="PRK05416.1"/>
    <property type="match status" value="1"/>
</dbReference>
<dbReference type="PANTHER" id="PTHR30448">
    <property type="entry name" value="RNASE ADAPTER PROTEIN RAPZ"/>
    <property type="match status" value="1"/>
</dbReference>
<dbReference type="PANTHER" id="PTHR30448:SF0">
    <property type="entry name" value="RNASE ADAPTER PROTEIN RAPZ"/>
    <property type="match status" value="1"/>
</dbReference>
<dbReference type="Pfam" id="PF22740">
    <property type="entry name" value="PapZ_C"/>
    <property type="match status" value="1"/>
</dbReference>
<dbReference type="Pfam" id="PF03668">
    <property type="entry name" value="RapZ-like_N"/>
    <property type="match status" value="1"/>
</dbReference>
<dbReference type="PIRSF" id="PIRSF005052">
    <property type="entry name" value="P-loopkin"/>
    <property type="match status" value="1"/>
</dbReference>
<dbReference type="SUPFAM" id="SSF52540">
    <property type="entry name" value="P-loop containing nucleoside triphosphate hydrolases"/>
    <property type="match status" value="1"/>
</dbReference>
<name>Y4948_BACMK</name>
<keyword id="KW-0067">ATP-binding</keyword>
<keyword id="KW-0342">GTP-binding</keyword>
<keyword id="KW-0547">Nucleotide-binding</keyword>
<organism>
    <name type="scientific">Bacillus mycoides (strain KBAB4)</name>
    <name type="common">Bacillus weihenstephanensis</name>
    <dbReference type="NCBI Taxonomy" id="315730"/>
    <lineage>
        <taxon>Bacteria</taxon>
        <taxon>Bacillati</taxon>
        <taxon>Bacillota</taxon>
        <taxon>Bacilli</taxon>
        <taxon>Bacillales</taxon>
        <taxon>Bacillaceae</taxon>
        <taxon>Bacillus</taxon>
        <taxon>Bacillus cereus group</taxon>
    </lineage>
</organism>
<evidence type="ECO:0000255" key="1">
    <source>
        <dbReference type="HAMAP-Rule" id="MF_00636"/>
    </source>
</evidence>
<proteinExistence type="inferred from homology"/>
<protein>
    <recommendedName>
        <fullName evidence="1">Nucleotide-binding protein BcerKBAB4_4948</fullName>
    </recommendedName>
</protein>
<sequence>MTENNDIKMVIITGMSGAGKTVALQSFEDLGYFCVDNLPPMLLPKFIELMADSKGKMNKVALGIDLRGREFFEYLWGALDDLSERTWIIPHILFLDAKDSTLVTRYKETRRSHPLAPTGLPLKGIEAERGLLTDMKARANIVLDTSDLKPKELREKIVHLFSTETEQAFRVNVMSFGFKYGIPIDADLVFDVRFLPNPYYIPHMKPLTGLDEEVSSYVLKFNETHKFLEKLTDLITFMLPHYKREGKSQLVIAIGCTGGQHRSVTLTEYLGKHLKPEYSVHVSHRDVEKRKGH</sequence>
<reference key="1">
    <citation type="journal article" date="2008" name="Chem. Biol. Interact.">
        <title>Extending the Bacillus cereus group genomics to putative food-borne pathogens of different toxicity.</title>
        <authorList>
            <person name="Lapidus A."/>
            <person name="Goltsman E."/>
            <person name="Auger S."/>
            <person name="Galleron N."/>
            <person name="Segurens B."/>
            <person name="Dossat C."/>
            <person name="Land M.L."/>
            <person name="Broussolle V."/>
            <person name="Brillard J."/>
            <person name="Guinebretiere M.-H."/>
            <person name="Sanchis V."/>
            <person name="Nguen-the C."/>
            <person name="Lereclus D."/>
            <person name="Richardson P."/>
            <person name="Wincker P."/>
            <person name="Weissenbach J."/>
            <person name="Ehrlich S.D."/>
            <person name="Sorokin A."/>
        </authorList>
    </citation>
    <scope>NUCLEOTIDE SEQUENCE [LARGE SCALE GENOMIC DNA]</scope>
    <source>
        <strain>KBAB4</strain>
    </source>
</reference>
<comment type="function">
    <text evidence="1">Displays ATPase and GTPase activities.</text>
</comment>
<comment type="similarity">
    <text evidence="1">Belongs to the RapZ-like family.</text>
</comment>
<accession>A9VQ69</accession>
<feature type="chain" id="PRO_1000130734" description="Nucleotide-binding protein BcerKBAB4_4948">
    <location>
        <begin position="1"/>
        <end position="293"/>
    </location>
</feature>
<feature type="binding site" evidence="1">
    <location>
        <begin position="14"/>
        <end position="21"/>
    </location>
    <ligand>
        <name>ATP</name>
        <dbReference type="ChEBI" id="CHEBI:30616"/>
    </ligand>
</feature>
<feature type="binding site" evidence="1">
    <location>
        <begin position="65"/>
        <end position="68"/>
    </location>
    <ligand>
        <name>GTP</name>
        <dbReference type="ChEBI" id="CHEBI:37565"/>
    </ligand>
</feature>
<gene>
    <name type="ordered locus">BcerKBAB4_4948</name>
</gene>